<sequence length="175" mass="18772">MGRTLENKQQIVGELKGLLAETELALVLDFKGLSIKEMSDLRDRLRVTNSVCKVTKNTLMRRAIDGDSSWANLDSLLTGTNAFVLVKGDVGAGVKAVRSFQNEFKKSETKGALFEGKLLSQDEIKAIADLPSREELMAQIAGAINAVATKVAVGINEVPTGMARALKQHAEGGDS</sequence>
<gene>
    <name evidence="1" type="primary">rplJ</name>
    <name evidence="1" type="synonym">rpl10</name>
    <name type="ordered locus">Syncc9902_2154</name>
</gene>
<protein>
    <recommendedName>
        <fullName evidence="1">Large ribosomal subunit protein uL10</fullName>
    </recommendedName>
    <alternativeName>
        <fullName evidence="2">50S ribosomal protein L10</fullName>
    </alternativeName>
</protein>
<name>RL10_SYNS9</name>
<reference key="1">
    <citation type="submission" date="2005-08" db="EMBL/GenBank/DDBJ databases">
        <title>Complete sequence of Synechococcus sp. CC9902.</title>
        <authorList>
            <person name="Copeland A."/>
            <person name="Lucas S."/>
            <person name="Lapidus A."/>
            <person name="Barry K."/>
            <person name="Detter J.C."/>
            <person name="Glavina T."/>
            <person name="Hammon N."/>
            <person name="Israni S."/>
            <person name="Pitluck S."/>
            <person name="Martinez M."/>
            <person name="Schmutz J."/>
            <person name="Larimer F."/>
            <person name="Land M."/>
            <person name="Kyrpides N."/>
            <person name="Ivanova N."/>
            <person name="Richardson P."/>
        </authorList>
    </citation>
    <scope>NUCLEOTIDE SEQUENCE [LARGE SCALE GENOMIC DNA]</scope>
    <source>
        <strain>CC9902</strain>
    </source>
</reference>
<organism>
    <name type="scientific">Synechococcus sp. (strain CC9902)</name>
    <dbReference type="NCBI Taxonomy" id="316279"/>
    <lineage>
        <taxon>Bacteria</taxon>
        <taxon>Bacillati</taxon>
        <taxon>Cyanobacteriota</taxon>
        <taxon>Cyanophyceae</taxon>
        <taxon>Synechococcales</taxon>
        <taxon>Synechococcaceae</taxon>
        <taxon>Synechococcus</taxon>
    </lineage>
</organism>
<accession>Q3AUJ7</accession>
<feature type="chain" id="PRO_0000234897" description="Large ribosomal subunit protein uL10">
    <location>
        <begin position="1"/>
        <end position="175"/>
    </location>
</feature>
<keyword id="KW-1185">Reference proteome</keyword>
<keyword id="KW-0687">Ribonucleoprotein</keyword>
<keyword id="KW-0689">Ribosomal protein</keyword>
<keyword id="KW-0694">RNA-binding</keyword>
<keyword id="KW-0699">rRNA-binding</keyword>
<evidence type="ECO:0000255" key="1">
    <source>
        <dbReference type="HAMAP-Rule" id="MF_00362"/>
    </source>
</evidence>
<evidence type="ECO:0000305" key="2"/>
<proteinExistence type="inferred from homology"/>
<comment type="function">
    <text evidence="1">Forms part of the ribosomal stalk, playing a central role in the interaction of the ribosome with GTP-bound translation factors.</text>
</comment>
<comment type="subunit">
    <text evidence="1">Part of the ribosomal stalk of the 50S ribosomal subunit. The N-terminus interacts with L11 and the large rRNA to form the base of the stalk. The C-terminus forms an elongated spine to which L12 dimers bind in a sequential fashion forming a multimeric L10(L12)X complex.</text>
</comment>
<comment type="similarity">
    <text evidence="1">Belongs to the universal ribosomal protein uL10 family.</text>
</comment>
<comment type="sequence caution" evidence="2">
    <conflict type="erroneous initiation">
        <sequence resource="EMBL-CDS" id="ABB27112"/>
    </conflict>
</comment>
<dbReference type="EMBL" id="CP000097">
    <property type="protein sequence ID" value="ABB27112.1"/>
    <property type="status" value="ALT_INIT"/>
    <property type="molecule type" value="Genomic_DNA"/>
</dbReference>
<dbReference type="RefSeq" id="WP_011360894.1">
    <property type="nucleotide sequence ID" value="NC_007513.1"/>
</dbReference>
<dbReference type="SMR" id="Q3AUJ7"/>
<dbReference type="STRING" id="316279.Syncc9902_2154"/>
<dbReference type="KEGG" id="sye:Syncc9902_2154"/>
<dbReference type="eggNOG" id="COG0244">
    <property type="taxonomic scope" value="Bacteria"/>
</dbReference>
<dbReference type="HOGENOM" id="CLU_092227_1_1_3"/>
<dbReference type="OrthoDB" id="9808307at2"/>
<dbReference type="Proteomes" id="UP000002712">
    <property type="component" value="Chromosome"/>
</dbReference>
<dbReference type="GO" id="GO:1990904">
    <property type="term" value="C:ribonucleoprotein complex"/>
    <property type="evidence" value="ECO:0007669"/>
    <property type="project" value="UniProtKB-KW"/>
</dbReference>
<dbReference type="GO" id="GO:0005840">
    <property type="term" value="C:ribosome"/>
    <property type="evidence" value="ECO:0007669"/>
    <property type="project" value="UniProtKB-KW"/>
</dbReference>
<dbReference type="GO" id="GO:0070180">
    <property type="term" value="F:large ribosomal subunit rRNA binding"/>
    <property type="evidence" value="ECO:0007669"/>
    <property type="project" value="UniProtKB-UniRule"/>
</dbReference>
<dbReference type="GO" id="GO:0006412">
    <property type="term" value="P:translation"/>
    <property type="evidence" value="ECO:0007669"/>
    <property type="project" value="UniProtKB-UniRule"/>
</dbReference>
<dbReference type="CDD" id="cd05797">
    <property type="entry name" value="Ribosomal_L10"/>
    <property type="match status" value="1"/>
</dbReference>
<dbReference type="Gene3D" id="3.30.70.1730">
    <property type="match status" value="1"/>
</dbReference>
<dbReference type="Gene3D" id="6.10.250.290">
    <property type="match status" value="1"/>
</dbReference>
<dbReference type="HAMAP" id="MF_00362">
    <property type="entry name" value="Ribosomal_uL10"/>
    <property type="match status" value="1"/>
</dbReference>
<dbReference type="InterPro" id="IPR001790">
    <property type="entry name" value="Ribosomal_uL10"/>
</dbReference>
<dbReference type="InterPro" id="IPR043141">
    <property type="entry name" value="Ribosomal_uL10-like_sf"/>
</dbReference>
<dbReference type="InterPro" id="IPR022973">
    <property type="entry name" value="Ribosomal_uL10_bac"/>
</dbReference>
<dbReference type="InterPro" id="IPR047865">
    <property type="entry name" value="Ribosomal_uL10_bac_type"/>
</dbReference>
<dbReference type="NCBIfam" id="NF000955">
    <property type="entry name" value="PRK00099.1-1"/>
    <property type="match status" value="1"/>
</dbReference>
<dbReference type="PANTHER" id="PTHR11560">
    <property type="entry name" value="39S RIBOSOMAL PROTEIN L10, MITOCHONDRIAL"/>
    <property type="match status" value="1"/>
</dbReference>
<dbReference type="Pfam" id="PF00466">
    <property type="entry name" value="Ribosomal_L10"/>
    <property type="match status" value="1"/>
</dbReference>
<dbReference type="SUPFAM" id="SSF160369">
    <property type="entry name" value="Ribosomal protein L10-like"/>
    <property type="match status" value="1"/>
</dbReference>